<keyword id="KW-0436">Ligase</keyword>
<keyword id="KW-0597">Phosphoprotein</keyword>
<keyword id="KW-0662">Pyridine nucleotide biosynthesis</keyword>
<dbReference type="EC" id="6.3.4.21" evidence="1"/>
<dbReference type="EMBL" id="CP000524">
    <property type="protein sequence ID" value="ABM45235.1"/>
    <property type="molecule type" value="Genomic_DNA"/>
</dbReference>
<dbReference type="RefSeq" id="WP_005768086.1">
    <property type="nucleotide sequence ID" value="NC_008783.1"/>
</dbReference>
<dbReference type="SMR" id="A1UUA2"/>
<dbReference type="STRING" id="360095.BARBAKC583_1307"/>
<dbReference type="GeneID" id="4684516"/>
<dbReference type="KEGG" id="bbk:BARBAKC583_1307"/>
<dbReference type="PATRIC" id="fig|360095.6.peg.1279"/>
<dbReference type="eggNOG" id="COG1488">
    <property type="taxonomic scope" value="Bacteria"/>
</dbReference>
<dbReference type="HOGENOM" id="CLU_030991_1_0_5"/>
<dbReference type="OrthoDB" id="9771406at2"/>
<dbReference type="UniPathway" id="UPA00253">
    <property type="reaction ID" value="UER00457"/>
</dbReference>
<dbReference type="Proteomes" id="UP000000643">
    <property type="component" value="Chromosome"/>
</dbReference>
<dbReference type="GO" id="GO:0005829">
    <property type="term" value="C:cytosol"/>
    <property type="evidence" value="ECO:0007669"/>
    <property type="project" value="TreeGrafter"/>
</dbReference>
<dbReference type="GO" id="GO:0004516">
    <property type="term" value="F:nicotinate phosphoribosyltransferase activity"/>
    <property type="evidence" value="ECO:0007669"/>
    <property type="project" value="UniProtKB-UniRule"/>
</dbReference>
<dbReference type="GO" id="GO:0034355">
    <property type="term" value="P:NAD biosynthetic process via the salvage pathway"/>
    <property type="evidence" value="ECO:0007669"/>
    <property type="project" value="TreeGrafter"/>
</dbReference>
<dbReference type="Gene3D" id="3.20.140.10">
    <property type="entry name" value="nicotinate phosphoribosyltransferase"/>
    <property type="match status" value="1"/>
</dbReference>
<dbReference type="HAMAP" id="MF_00570">
    <property type="entry name" value="NAPRTase"/>
    <property type="match status" value="1"/>
</dbReference>
<dbReference type="InterPro" id="IPR041525">
    <property type="entry name" value="N/Namide_PRibTrfase"/>
</dbReference>
<dbReference type="InterPro" id="IPR040727">
    <property type="entry name" value="NAPRTase_N"/>
</dbReference>
<dbReference type="InterPro" id="IPR006406">
    <property type="entry name" value="Nic_PRibTrfase"/>
</dbReference>
<dbReference type="InterPro" id="IPR007229">
    <property type="entry name" value="Nic_PRibTrfase-Fam"/>
</dbReference>
<dbReference type="InterPro" id="IPR036068">
    <property type="entry name" value="Nicotinate_pribotase-like_C"/>
</dbReference>
<dbReference type="NCBIfam" id="TIGR01514">
    <property type="entry name" value="NAPRTase"/>
    <property type="match status" value="1"/>
</dbReference>
<dbReference type="NCBIfam" id="NF003704">
    <property type="entry name" value="PRK05321.1"/>
    <property type="match status" value="1"/>
</dbReference>
<dbReference type="PANTHER" id="PTHR11098">
    <property type="entry name" value="NICOTINATE PHOSPHORIBOSYLTRANSFERASE"/>
    <property type="match status" value="1"/>
</dbReference>
<dbReference type="PANTHER" id="PTHR11098:SF1">
    <property type="entry name" value="NICOTINATE PHOSPHORIBOSYLTRANSFERASE"/>
    <property type="match status" value="1"/>
</dbReference>
<dbReference type="Pfam" id="PF04095">
    <property type="entry name" value="NAPRTase"/>
    <property type="match status" value="1"/>
</dbReference>
<dbReference type="Pfam" id="PF17767">
    <property type="entry name" value="NAPRTase_N"/>
    <property type="match status" value="1"/>
</dbReference>
<dbReference type="PIRSF" id="PIRSF000484">
    <property type="entry name" value="NAPRT"/>
    <property type="match status" value="1"/>
</dbReference>
<dbReference type="SUPFAM" id="SSF51690">
    <property type="entry name" value="Nicotinate/Quinolinate PRTase C-terminal domain-like"/>
    <property type="match status" value="1"/>
</dbReference>
<dbReference type="SUPFAM" id="SSF54675">
    <property type="entry name" value="Nicotinate/Quinolinate PRTase N-terminal domain-like"/>
    <property type="match status" value="1"/>
</dbReference>
<name>PNCB_BARBK</name>
<protein>
    <recommendedName>
        <fullName evidence="1">Nicotinate phosphoribosyltransferase</fullName>
        <shortName evidence="1">NAPRTase</shortName>
        <ecNumber evidence="1">6.3.4.21</ecNumber>
    </recommendedName>
</protein>
<feature type="chain" id="PRO_1000146828" description="Nicotinate phosphoribosyltransferase">
    <location>
        <begin position="1"/>
        <end position="424"/>
    </location>
</feature>
<feature type="modified residue" description="Phosphohistidine; by autocatalysis" evidence="1">
    <location>
        <position position="242"/>
    </location>
</feature>
<evidence type="ECO:0000255" key="1">
    <source>
        <dbReference type="HAMAP-Rule" id="MF_00570"/>
    </source>
</evidence>
<proteinExistence type="inferred from homology"/>
<accession>A1UUA2</accession>
<comment type="function">
    <text evidence="1">Catalyzes the synthesis of beta-nicotinate D-ribonucleotide from nicotinate and 5-phospho-D-ribose 1-phosphate at the expense of ATP.</text>
</comment>
<comment type="catalytic activity">
    <reaction evidence="1">
        <text>nicotinate + 5-phospho-alpha-D-ribose 1-diphosphate + ATP + H2O = nicotinate beta-D-ribonucleotide + ADP + phosphate + diphosphate</text>
        <dbReference type="Rhea" id="RHEA:36163"/>
        <dbReference type="ChEBI" id="CHEBI:15377"/>
        <dbReference type="ChEBI" id="CHEBI:30616"/>
        <dbReference type="ChEBI" id="CHEBI:32544"/>
        <dbReference type="ChEBI" id="CHEBI:33019"/>
        <dbReference type="ChEBI" id="CHEBI:43474"/>
        <dbReference type="ChEBI" id="CHEBI:57502"/>
        <dbReference type="ChEBI" id="CHEBI:58017"/>
        <dbReference type="ChEBI" id="CHEBI:456216"/>
        <dbReference type="EC" id="6.3.4.21"/>
    </reaction>
</comment>
<comment type="pathway">
    <text evidence="1">Cofactor biosynthesis; NAD(+) biosynthesis; nicotinate D-ribonucleotide from nicotinate: step 1/1.</text>
</comment>
<comment type="PTM">
    <text evidence="1">Transiently phosphorylated on a His residue during the reaction cycle. Phosphorylation strongly increases the affinity for substrates and increases the rate of nicotinate D-ribonucleotide production. Dephosphorylation regenerates the low-affinity form of the enzyme, leading to product release.</text>
</comment>
<comment type="similarity">
    <text evidence="1">Belongs to the NAPRTase family.</text>
</comment>
<sequence>MNHTDIAKRVYNHTWKLDPIVRSLLDTDFYKLLMLQMIWGLYPDVHVTFSLINRNKAIHLADDIDEGELRAQLDHTLSLRFTKKEIIWLAGNTFYGQKQIFKPDFLHWLENFQLPDYELSRKDGQYILHFHGSWAYSSMWEIPALTIISELRSRAAMKNLDRFALDVLYARAKAKMWSKIERLKKLPDIKISDFGTRRRHSFLWQRWCVEALKEGIGASFTGTSNVLLAMDTDLEALGTNAHELPMVIAALTNNDDDLRKAPYQVLQDWKRYYEGNLLIVLPDTFGTEAFLRNAPKWVADWTGFRPDSAPPIEGGERIIQWWQEQGKKPQEKLLIFSDALDVDTIEKTYHHFHGKVRMIFGWGTNLTNDFANCAPQEIADLDVTSLVCKVTSANGRPAVKLSDNPEKTIGNPQEIQRYLNFFSH</sequence>
<reference key="1">
    <citation type="submission" date="2006-12" db="EMBL/GenBank/DDBJ databases">
        <authorList>
            <person name="Hendrix L."/>
            <person name="Mohamoud Y."/>
            <person name="Radune D."/>
            <person name="Shvartsbeyn A."/>
            <person name="Daugherty S."/>
            <person name="Dodson R."/>
            <person name="Durkin A.S."/>
            <person name="Harkins D."/>
            <person name="Huot H."/>
            <person name="Kothari S.P."/>
            <person name="Madupu R."/>
            <person name="Li J."/>
            <person name="Nelson W.C."/>
            <person name="Shrivastava S."/>
            <person name="Giglio M.G."/>
            <person name="Haft D."/>
            <person name="Selengut J."/>
            <person name="Fraser-Ligget C."/>
            <person name="Seshadri R."/>
        </authorList>
    </citation>
    <scope>NUCLEOTIDE SEQUENCE [LARGE SCALE GENOMIC DNA]</scope>
    <source>
        <strain>ATCC 35685 / KC583 / Herrer 020/F12,63</strain>
    </source>
</reference>
<organism>
    <name type="scientific">Bartonella bacilliformis (strain ATCC 35685 / KC583 / Herrer 020/F12,63)</name>
    <dbReference type="NCBI Taxonomy" id="360095"/>
    <lineage>
        <taxon>Bacteria</taxon>
        <taxon>Pseudomonadati</taxon>
        <taxon>Pseudomonadota</taxon>
        <taxon>Alphaproteobacteria</taxon>
        <taxon>Hyphomicrobiales</taxon>
        <taxon>Bartonellaceae</taxon>
        <taxon>Bartonella</taxon>
    </lineage>
</organism>
<gene>
    <name evidence="1" type="primary">pncB</name>
    <name type="ordered locus">BARBAKC583_1307</name>
</gene>